<dbReference type="EC" id="3.1.1.29" evidence="1"/>
<dbReference type="EMBL" id="CP000013">
    <property type="protein sequence ID" value="AAU07634.1"/>
    <property type="molecule type" value="Genomic_DNA"/>
</dbReference>
<dbReference type="SMR" id="Q65ZY7"/>
<dbReference type="KEGG" id="bga:BG0812"/>
<dbReference type="eggNOG" id="COG0193">
    <property type="taxonomic scope" value="Bacteria"/>
</dbReference>
<dbReference type="HOGENOM" id="CLU_062456_4_1_12"/>
<dbReference type="Proteomes" id="UP000002276">
    <property type="component" value="Chromosome"/>
</dbReference>
<dbReference type="GO" id="GO:0005737">
    <property type="term" value="C:cytoplasm"/>
    <property type="evidence" value="ECO:0007669"/>
    <property type="project" value="UniProtKB-SubCell"/>
</dbReference>
<dbReference type="GO" id="GO:0004045">
    <property type="term" value="F:peptidyl-tRNA hydrolase activity"/>
    <property type="evidence" value="ECO:0007669"/>
    <property type="project" value="UniProtKB-UniRule"/>
</dbReference>
<dbReference type="GO" id="GO:0000049">
    <property type="term" value="F:tRNA binding"/>
    <property type="evidence" value="ECO:0007669"/>
    <property type="project" value="UniProtKB-UniRule"/>
</dbReference>
<dbReference type="GO" id="GO:0006515">
    <property type="term" value="P:protein quality control for misfolded or incompletely synthesized proteins"/>
    <property type="evidence" value="ECO:0007669"/>
    <property type="project" value="UniProtKB-UniRule"/>
</dbReference>
<dbReference type="GO" id="GO:0072344">
    <property type="term" value="P:rescue of stalled ribosome"/>
    <property type="evidence" value="ECO:0007669"/>
    <property type="project" value="UniProtKB-UniRule"/>
</dbReference>
<dbReference type="CDD" id="cd00462">
    <property type="entry name" value="PTH"/>
    <property type="match status" value="1"/>
</dbReference>
<dbReference type="Gene3D" id="3.40.50.1470">
    <property type="entry name" value="Peptidyl-tRNA hydrolase"/>
    <property type="match status" value="1"/>
</dbReference>
<dbReference type="HAMAP" id="MF_00083">
    <property type="entry name" value="Pept_tRNA_hydro_bact"/>
    <property type="match status" value="1"/>
</dbReference>
<dbReference type="InterPro" id="IPR001328">
    <property type="entry name" value="Pept_tRNA_hydro"/>
</dbReference>
<dbReference type="InterPro" id="IPR018171">
    <property type="entry name" value="Pept_tRNA_hydro_CS"/>
</dbReference>
<dbReference type="InterPro" id="IPR036416">
    <property type="entry name" value="Pept_tRNA_hydro_sf"/>
</dbReference>
<dbReference type="NCBIfam" id="TIGR00447">
    <property type="entry name" value="pth"/>
    <property type="match status" value="1"/>
</dbReference>
<dbReference type="PANTHER" id="PTHR17224">
    <property type="entry name" value="PEPTIDYL-TRNA HYDROLASE"/>
    <property type="match status" value="1"/>
</dbReference>
<dbReference type="PANTHER" id="PTHR17224:SF1">
    <property type="entry name" value="PEPTIDYL-TRNA HYDROLASE"/>
    <property type="match status" value="1"/>
</dbReference>
<dbReference type="Pfam" id="PF01195">
    <property type="entry name" value="Pept_tRNA_hydro"/>
    <property type="match status" value="1"/>
</dbReference>
<dbReference type="SUPFAM" id="SSF53178">
    <property type="entry name" value="Peptidyl-tRNA hydrolase-like"/>
    <property type="match status" value="1"/>
</dbReference>
<dbReference type="PROSITE" id="PS01195">
    <property type="entry name" value="PEPT_TRNA_HYDROL_1"/>
    <property type="match status" value="1"/>
</dbReference>
<dbReference type="PROSITE" id="PS01196">
    <property type="entry name" value="PEPT_TRNA_HYDROL_2"/>
    <property type="match status" value="1"/>
</dbReference>
<sequence length="185" mass="20981">MILGLGNPGLEFSLTRHNVGFSLLDRIISKNGLFLKRKKKYEYSEMRMISGRVILVKPLTYMNLSGSLFPSIFSDFYMCIKNLLVVLDNVDLPLGKCRLKERGGASTHNGLKSISSILGSSNYSRLYIGVGSNVMRDIKSFVLSRFCKDEIDRLEKLYDFLSDELIDISEANFKNKVQKINSSNF</sequence>
<keyword id="KW-0963">Cytoplasm</keyword>
<keyword id="KW-0378">Hydrolase</keyword>
<keyword id="KW-0694">RNA-binding</keyword>
<keyword id="KW-0820">tRNA-binding</keyword>
<name>PTH_BORGP</name>
<proteinExistence type="inferred from homology"/>
<gene>
    <name evidence="1" type="primary">pth</name>
    <name type="ordered locus">BG0812</name>
</gene>
<accession>Q65ZY7</accession>
<organism>
    <name type="scientific">Borrelia garinii subsp. bavariensis (strain ATCC BAA-2496 / DSM 23469 / PBi)</name>
    <name type="common">Borreliella bavariensis</name>
    <dbReference type="NCBI Taxonomy" id="290434"/>
    <lineage>
        <taxon>Bacteria</taxon>
        <taxon>Pseudomonadati</taxon>
        <taxon>Spirochaetota</taxon>
        <taxon>Spirochaetia</taxon>
        <taxon>Spirochaetales</taxon>
        <taxon>Borreliaceae</taxon>
        <taxon>Borreliella</taxon>
    </lineage>
</organism>
<evidence type="ECO:0000255" key="1">
    <source>
        <dbReference type="HAMAP-Rule" id="MF_00083"/>
    </source>
</evidence>
<reference key="1">
    <citation type="journal article" date="2004" name="Nucleic Acids Res.">
        <title>Comparative analysis of the Borrelia garinii genome.</title>
        <authorList>
            <person name="Gloeckner G."/>
            <person name="Lehmann R."/>
            <person name="Romualdi A."/>
            <person name="Pradella S."/>
            <person name="Schulte-Spechtel U."/>
            <person name="Schilhabel M."/>
            <person name="Wilske B."/>
            <person name="Suehnel J."/>
            <person name="Platzer M."/>
        </authorList>
    </citation>
    <scope>NUCLEOTIDE SEQUENCE [LARGE SCALE GENOMIC DNA]</scope>
    <source>
        <strain>ATCC BAA-2496 / DSM 23469 / PBi</strain>
    </source>
</reference>
<protein>
    <recommendedName>
        <fullName evidence="1">Peptidyl-tRNA hydrolase</fullName>
        <shortName evidence="1">Pth</shortName>
        <ecNumber evidence="1">3.1.1.29</ecNumber>
    </recommendedName>
</protein>
<comment type="function">
    <text evidence="1">Hydrolyzes ribosome-free peptidyl-tRNAs (with 1 or more amino acids incorporated), which drop off the ribosome during protein synthesis, or as a result of ribosome stalling.</text>
</comment>
<comment type="function">
    <text evidence="1">Catalyzes the release of premature peptidyl moieties from peptidyl-tRNA molecules trapped in stalled 50S ribosomal subunits, and thus maintains levels of free tRNAs and 50S ribosomes.</text>
</comment>
<comment type="catalytic activity">
    <reaction evidence="1">
        <text>an N-acyl-L-alpha-aminoacyl-tRNA + H2O = an N-acyl-L-amino acid + a tRNA + H(+)</text>
        <dbReference type="Rhea" id="RHEA:54448"/>
        <dbReference type="Rhea" id="RHEA-COMP:10123"/>
        <dbReference type="Rhea" id="RHEA-COMP:13883"/>
        <dbReference type="ChEBI" id="CHEBI:15377"/>
        <dbReference type="ChEBI" id="CHEBI:15378"/>
        <dbReference type="ChEBI" id="CHEBI:59874"/>
        <dbReference type="ChEBI" id="CHEBI:78442"/>
        <dbReference type="ChEBI" id="CHEBI:138191"/>
        <dbReference type="EC" id="3.1.1.29"/>
    </reaction>
</comment>
<comment type="subunit">
    <text evidence="1">Monomer.</text>
</comment>
<comment type="subcellular location">
    <subcellularLocation>
        <location evidence="1">Cytoplasm</location>
    </subcellularLocation>
</comment>
<comment type="similarity">
    <text evidence="1">Belongs to the PTH family.</text>
</comment>
<feature type="chain" id="PRO_0000187700" description="Peptidyl-tRNA hydrolase">
    <location>
        <begin position="1"/>
        <end position="185"/>
    </location>
</feature>
<feature type="active site" description="Proton acceptor" evidence="1">
    <location>
        <position position="17"/>
    </location>
</feature>
<feature type="binding site" evidence="1">
    <location>
        <position position="12"/>
    </location>
    <ligand>
        <name>tRNA</name>
        <dbReference type="ChEBI" id="CHEBI:17843"/>
    </ligand>
</feature>
<feature type="binding site" evidence="1">
    <location>
        <position position="61"/>
    </location>
    <ligand>
        <name>tRNA</name>
        <dbReference type="ChEBI" id="CHEBI:17843"/>
    </ligand>
</feature>
<feature type="binding site" evidence="1">
    <location>
        <position position="63"/>
    </location>
    <ligand>
        <name>tRNA</name>
        <dbReference type="ChEBI" id="CHEBI:17843"/>
    </ligand>
</feature>
<feature type="binding site" evidence="1">
    <location>
        <position position="109"/>
    </location>
    <ligand>
        <name>tRNA</name>
        <dbReference type="ChEBI" id="CHEBI:17843"/>
    </ligand>
</feature>
<feature type="site" description="Discriminates between blocked and unblocked aminoacyl-tRNA" evidence="1">
    <location>
        <position position="7"/>
    </location>
</feature>
<feature type="site" description="Stabilizes the basic form of H active site to accept a proton" evidence="1">
    <location>
        <position position="88"/>
    </location>
</feature>